<comment type="function">
    <text evidence="1 3 4">Cleaves both 3' and 5' ssDNA extremities of branched DNA structures. Binds to ssDNA.</text>
</comment>
<comment type="activity regulation">
    <text evidence="4">Activity is modulated by PCNA. PCNA increases the binding affinity of NucS towards ssDNA as well as branched DNA substrates carrying either 3' or 5' flaps. PCNA is also required for optimal loading of NucS on its substrates and to direct activity towards ss/dsDNA junction.</text>
</comment>
<comment type="subunit">
    <text evidence="3 4">Homodimer. Interacts with PCNA.</text>
</comment>
<comment type="interaction">
    <interactant intactId="EBI-7103178">
        <id>Q9V2E8</id>
    </interactant>
    <interactant intactId="EBI-7103178">
        <id>Q9V2E8</id>
        <label>nucS</label>
    </interactant>
    <organismsDiffer>false</organismsDiffer>
    <experiments>4</experiments>
</comment>
<comment type="interaction">
    <interactant intactId="EBI-7103178">
        <id>Q9V2E8</id>
    </interactant>
    <interactant intactId="EBI-7103152">
        <id>Q9UYX8</id>
        <label>pcn</label>
    </interactant>
    <organismsDiffer>false</organismsDiffer>
    <experiments>3</experiments>
</comment>
<comment type="subcellular location">
    <subcellularLocation>
        <location evidence="1">Cytoplasm</location>
    </subcellularLocation>
</comment>
<comment type="domain">
    <text evidence="3">Composed of two independent domains separated by a small linker. The N-terminal region contains the ssDNA binding site and the C-terminal region contains the nuclease active site.</text>
</comment>
<comment type="similarity">
    <text evidence="1">Belongs to the NucS endonuclease family.</text>
</comment>
<gene>
    <name evidence="1" type="primary">nucS</name>
    <name type="ordered locus">PYRAB01260</name>
    <name type="ORF">PAB2263</name>
</gene>
<evidence type="ECO:0000255" key="1">
    <source>
        <dbReference type="HAMAP-Rule" id="MF_00722"/>
    </source>
</evidence>
<evidence type="ECO:0000256" key="2">
    <source>
        <dbReference type="SAM" id="MobiDB-lite"/>
    </source>
</evidence>
<evidence type="ECO:0000269" key="3">
    <source>
    </source>
</evidence>
<evidence type="ECO:0000269" key="4">
    <source>
    </source>
</evidence>
<evidence type="ECO:0007829" key="5">
    <source>
        <dbReference type="PDB" id="2VLD"/>
    </source>
</evidence>
<accession>Q9V2E8</accession>
<accession>G8ZFW1</accession>
<feature type="chain" id="PRO_0000155694" description="Endonuclease NucS">
    <location>
        <begin position="1"/>
        <end position="251"/>
    </location>
</feature>
<feature type="region of interest" description="Disordered" evidence="2">
    <location>
        <begin position="230"/>
        <end position="251"/>
    </location>
</feature>
<feature type="compositionally biased region" description="Basic and acidic residues" evidence="2">
    <location>
        <begin position="230"/>
        <end position="240"/>
    </location>
</feature>
<feature type="mutagenesis site" description="Fails to bind ssDNA." evidence="3">
    <original>R</original>
    <variation>A</variation>
    <location>
        <position position="42"/>
    </location>
</feature>
<feature type="mutagenesis site" description="Fails to bind ssDNA." evidence="3">
    <original>R</original>
    <variation>A</variation>
    <location>
        <position position="70"/>
    </location>
</feature>
<feature type="mutagenesis site" description="Fails to bind ssDNA." evidence="3">
    <original>W</original>
    <variation>S</variation>
    <location>
        <position position="75"/>
    </location>
</feature>
<feature type="strand" evidence="5">
    <location>
        <begin position="3"/>
        <end position="9"/>
    </location>
</feature>
<feature type="helix" evidence="5">
    <location>
        <begin position="12"/>
        <end position="25"/>
    </location>
</feature>
<feature type="strand" evidence="5">
    <location>
        <begin position="28"/>
        <end position="56"/>
    </location>
</feature>
<feature type="strand" evidence="5">
    <location>
        <begin position="62"/>
        <end position="65"/>
    </location>
</feature>
<feature type="strand" evidence="5">
    <location>
        <begin position="73"/>
        <end position="76"/>
    </location>
</feature>
<feature type="strand" evidence="5">
    <location>
        <begin position="81"/>
        <end position="92"/>
    </location>
</feature>
<feature type="strand" evidence="5">
    <location>
        <begin position="94"/>
        <end position="96"/>
    </location>
</feature>
<feature type="strand" evidence="5">
    <location>
        <begin position="98"/>
        <end position="113"/>
    </location>
</feature>
<feature type="helix" evidence="5">
    <location>
        <begin position="127"/>
        <end position="136"/>
    </location>
</feature>
<feature type="helix" evidence="5">
    <location>
        <begin position="138"/>
        <end position="140"/>
    </location>
</feature>
<feature type="strand" evidence="5">
    <location>
        <begin position="146"/>
        <end position="154"/>
    </location>
</feature>
<feature type="strand" evidence="5">
    <location>
        <begin position="157"/>
        <end position="164"/>
    </location>
</feature>
<feature type="strand" evidence="5">
    <location>
        <begin position="170"/>
        <end position="175"/>
    </location>
</feature>
<feature type="helix" evidence="5">
    <location>
        <begin position="182"/>
        <end position="199"/>
    </location>
</feature>
<feature type="strand" evidence="5">
    <location>
        <begin position="203"/>
        <end position="210"/>
    </location>
</feature>
<feature type="helix" evidence="5">
    <location>
        <begin position="214"/>
        <end position="223"/>
    </location>
</feature>
<feature type="strand" evidence="5">
    <location>
        <begin position="226"/>
        <end position="229"/>
    </location>
</feature>
<name>NUCS_PYRAB</name>
<reference key="1">
    <citation type="journal article" date="2003" name="Mol. Microbiol.">
        <title>An integrated analysis of the genome of the hyperthermophilic archaeon Pyrococcus abyssi.</title>
        <authorList>
            <person name="Cohen G.N."/>
            <person name="Barbe V."/>
            <person name="Flament D."/>
            <person name="Galperin M."/>
            <person name="Heilig R."/>
            <person name="Lecompte O."/>
            <person name="Poch O."/>
            <person name="Prieur D."/>
            <person name="Querellou J."/>
            <person name="Ripp R."/>
            <person name="Thierry J.-C."/>
            <person name="Van der Oost J."/>
            <person name="Weissenbach J."/>
            <person name="Zivanovic Y."/>
            <person name="Forterre P."/>
        </authorList>
    </citation>
    <scope>NUCLEOTIDE SEQUENCE [LARGE SCALE GENOMIC DNA]</scope>
    <source>
        <strain>GE5 / Orsay</strain>
    </source>
</reference>
<reference key="2">
    <citation type="journal article" date="2012" name="Curr. Microbiol.">
        <title>Re-annotation of two hyperthermophilic archaea Pyrococcus abyssi GE5 and Pyrococcus furiosus DSM 3638.</title>
        <authorList>
            <person name="Gao J."/>
            <person name="Wang J."/>
        </authorList>
    </citation>
    <scope>GENOME REANNOTATION</scope>
    <source>
        <strain>GE5 / Orsay</strain>
    </source>
</reference>
<reference key="3">
    <citation type="journal article" date="2012" name="J. Biol. Chem.">
        <title>Modulation of the Pyrococcus abyssi NucS endonuclease activity by the replication clamp PCNA at functional and structural levels.</title>
        <authorList>
            <person name="Creze C."/>
            <person name="Ligabue A."/>
            <person name="Laurent S."/>
            <person name="Lestini R."/>
            <person name="Laptenok S.P."/>
            <person name="Kuhn J."/>
            <person name="Vos M.H."/>
            <person name="Czjzek M."/>
            <person name="Myllykallio H."/>
            <person name="Flament D."/>
        </authorList>
    </citation>
    <scope>FUNCTION</scope>
    <scope>ACTIVITY REGULATION</scope>
    <scope>SUBUNIT</scope>
    <scope>INTERACTION WITH PCNA</scope>
</reference>
<reference key="4">
    <citation type="journal article" date="2009" name="EMBO J.">
        <title>Structure and function of a novel endonuclease acting on branched DNA substrates.</title>
        <authorList>
            <person name="Ren B."/>
            <person name="Kuhn J."/>
            <person name="Meslet-Cladiere L."/>
            <person name="Briffotaux J."/>
            <person name="Norais C."/>
            <person name="Lavigne R."/>
            <person name="Flament D."/>
            <person name="Ladenstein R."/>
            <person name="Myllykallio H."/>
        </authorList>
    </citation>
    <scope>X-RAY CRYSTALLOGRAPHY (2.6 ANGSTROMS)</scope>
    <scope>FUNCTION</scope>
    <scope>DNA-BINDING</scope>
    <scope>SUBUNIT</scope>
    <scope>INTERACTION WITH PCNA</scope>
    <scope>DOMAIN</scope>
    <scope>MUTAGENESIS OF ARG-42; ARG-70 AND TRP-75</scope>
</reference>
<protein>
    <recommendedName>
        <fullName evidence="1">Endonuclease NucS</fullName>
        <ecNumber evidence="1">3.1.-.-</ecNumber>
    </recommendedName>
    <alternativeName>
        <fullName>Nuclease for ssDNA</fullName>
    </alternativeName>
</protein>
<proteinExistence type="evidence at protein level"/>
<sequence length="251" mass="28831">MRKVIIKENPSEEEIKELLDLAEKHGGVVTIFARCKVHYEGRAKSELGEGDRIIIIKPDGSFLIHQNKKREPVNWQPPGSKVTFKENSIISIRRRPYERLEVEIIEPYSLVVFLAEDYEELALTGSEAEMANLIFENPRVIEEGFKPIYREKPIRHGIVDVMGVDKDGNIVVLELKRRKADLHAVSQLKRYVDSLKEEYGENVRGILVAPSLTEGAKKLLEKEGLEFRKLEPPKKGNEKRSKQKTLDFFTP</sequence>
<dbReference type="EC" id="3.1.-.-" evidence="1"/>
<dbReference type="EMBL" id="AJ248283">
    <property type="protein sequence ID" value="CAB49050.1"/>
    <property type="molecule type" value="Genomic_DNA"/>
</dbReference>
<dbReference type="EMBL" id="HE613800">
    <property type="protein sequence ID" value="CCE69502.1"/>
    <property type="molecule type" value="Genomic_DNA"/>
</dbReference>
<dbReference type="PIR" id="C75200">
    <property type="entry name" value="C75200"/>
</dbReference>
<dbReference type="RefSeq" id="WP_010867250.1">
    <property type="nucleotide sequence ID" value="NC_000868.1"/>
</dbReference>
<dbReference type="PDB" id="2VLD">
    <property type="method" value="X-ray"/>
    <property type="resolution" value="2.60 A"/>
    <property type="chains" value="A/B=1-251"/>
</dbReference>
<dbReference type="PDBsum" id="2VLD"/>
<dbReference type="SMR" id="Q9V2E8"/>
<dbReference type="IntAct" id="Q9V2E8">
    <property type="interactions" value="6"/>
</dbReference>
<dbReference type="MINT" id="Q9V2E8"/>
<dbReference type="STRING" id="272844.PAB2263"/>
<dbReference type="KEGG" id="pab:PAB2263"/>
<dbReference type="PATRIC" id="fig|272844.11.peg.139"/>
<dbReference type="eggNOG" id="arCOG01304">
    <property type="taxonomic scope" value="Archaea"/>
</dbReference>
<dbReference type="HOGENOM" id="CLU_069350_1_0_2"/>
<dbReference type="OrthoDB" id="15177at2157"/>
<dbReference type="PhylomeDB" id="Q9V2E8"/>
<dbReference type="BRENDA" id="3.1.11.5">
    <property type="organism ID" value="5242"/>
</dbReference>
<dbReference type="EvolutionaryTrace" id="Q9V2E8"/>
<dbReference type="Proteomes" id="UP000000810">
    <property type="component" value="Chromosome"/>
</dbReference>
<dbReference type="Proteomes" id="UP000009139">
    <property type="component" value="Chromosome"/>
</dbReference>
<dbReference type="GO" id="GO:0005737">
    <property type="term" value="C:cytoplasm"/>
    <property type="evidence" value="ECO:0007669"/>
    <property type="project" value="UniProtKB-SubCell"/>
</dbReference>
<dbReference type="GO" id="GO:0003677">
    <property type="term" value="F:DNA binding"/>
    <property type="evidence" value="ECO:0007669"/>
    <property type="project" value="UniProtKB-KW"/>
</dbReference>
<dbReference type="GO" id="GO:0042802">
    <property type="term" value="F:identical protein binding"/>
    <property type="evidence" value="ECO:0000353"/>
    <property type="project" value="IntAct"/>
</dbReference>
<dbReference type="GO" id="GO:0000014">
    <property type="term" value="F:single-stranded DNA endodeoxyribonuclease activity"/>
    <property type="evidence" value="ECO:0007669"/>
    <property type="project" value="UniProtKB-UniRule"/>
</dbReference>
<dbReference type="CDD" id="cd22341">
    <property type="entry name" value="NucS-like"/>
    <property type="match status" value="1"/>
</dbReference>
<dbReference type="Gene3D" id="2.70.180.20">
    <property type="match status" value="1"/>
</dbReference>
<dbReference type="Gene3D" id="3.40.1350.10">
    <property type="match status" value="1"/>
</dbReference>
<dbReference type="HAMAP" id="MF_00722">
    <property type="entry name" value="NucS"/>
    <property type="match status" value="1"/>
</dbReference>
<dbReference type="InterPro" id="IPR002793">
    <property type="entry name" value="Endonuclease_NucS"/>
</dbReference>
<dbReference type="InterPro" id="IPR048301">
    <property type="entry name" value="NucS_C"/>
</dbReference>
<dbReference type="InterPro" id="IPR048302">
    <property type="entry name" value="NucS_N"/>
</dbReference>
<dbReference type="InterPro" id="IPR049173">
    <property type="entry name" value="NucS_N_sf"/>
</dbReference>
<dbReference type="InterPro" id="IPR011856">
    <property type="entry name" value="tRNA_endonuc-like_dom_sf"/>
</dbReference>
<dbReference type="NCBIfam" id="NF003270">
    <property type="entry name" value="PRK04247.1"/>
    <property type="match status" value="1"/>
</dbReference>
<dbReference type="PANTHER" id="PTHR38814">
    <property type="entry name" value="ENDONUCLEASE NUCS"/>
    <property type="match status" value="1"/>
</dbReference>
<dbReference type="PANTHER" id="PTHR38814:SF1">
    <property type="entry name" value="ENDONUCLEASE NUCS"/>
    <property type="match status" value="1"/>
</dbReference>
<dbReference type="Pfam" id="PF01939">
    <property type="entry name" value="NucS_C"/>
    <property type="match status" value="1"/>
</dbReference>
<dbReference type="Pfam" id="PF21003">
    <property type="entry name" value="NucS_N"/>
    <property type="match status" value="1"/>
</dbReference>
<organism>
    <name type="scientific">Pyrococcus abyssi (strain GE5 / Orsay)</name>
    <dbReference type="NCBI Taxonomy" id="272844"/>
    <lineage>
        <taxon>Archaea</taxon>
        <taxon>Methanobacteriati</taxon>
        <taxon>Methanobacteriota</taxon>
        <taxon>Thermococci</taxon>
        <taxon>Thermococcales</taxon>
        <taxon>Thermococcaceae</taxon>
        <taxon>Pyrococcus</taxon>
    </lineage>
</organism>
<keyword id="KW-0002">3D-structure</keyword>
<keyword id="KW-0963">Cytoplasm</keyword>
<keyword id="KW-0238">DNA-binding</keyword>
<keyword id="KW-0255">Endonuclease</keyword>
<keyword id="KW-0378">Hydrolase</keyword>
<keyword id="KW-0540">Nuclease</keyword>